<evidence type="ECO:0000255" key="1">
    <source>
        <dbReference type="HAMAP-Rule" id="MF_01264"/>
    </source>
</evidence>
<gene>
    <name evidence="1" type="primary">cca</name>
    <name type="ordered locus">OE_1222R</name>
</gene>
<accession>B0R2Q7</accession>
<comment type="function">
    <text evidence="1">Catalyzes the addition and repair of the essential 3'-terminal CCA sequence in tRNAs without using a nucleic acid template. Adds these three nucleotides in the order of C, C, and A to the tRNA nucleotide-73, using CTP and ATP as substrates and producing inorganic pyrophosphate. tRNA 3'-terminal CCA addition is required both for tRNA processing and repair. Also involved in tRNA surveillance by mediating tandem CCA addition to generate a CCACCA at the 3' terminus of unstable tRNAs. While stable tRNAs receive only 3'-terminal CCA, unstable tRNAs are marked with CCACCA and rapidly degraded.</text>
</comment>
<comment type="catalytic activity">
    <reaction evidence="1">
        <text>a tRNA precursor + 2 CTP + ATP = a tRNA with a 3' CCA end + 3 diphosphate</text>
        <dbReference type="Rhea" id="RHEA:14433"/>
        <dbReference type="Rhea" id="RHEA-COMP:10465"/>
        <dbReference type="Rhea" id="RHEA-COMP:10468"/>
        <dbReference type="ChEBI" id="CHEBI:30616"/>
        <dbReference type="ChEBI" id="CHEBI:33019"/>
        <dbReference type="ChEBI" id="CHEBI:37563"/>
        <dbReference type="ChEBI" id="CHEBI:74896"/>
        <dbReference type="ChEBI" id="CHEBI:83071"/>
        <dbReference type="EC" id="2.7.7.72"/>
    </reaction>
</comment>
<comment type="catalytic activity">
    <reaction evidence="1">
        <text>a tRNA with a 3' CCA end + 2 CTP + ATP = a tRNA with a 3' CCACCA end + 3 diphosphate</text>
        <dbReference type="Rhea" id="RHEA:76235"/>
        <dbReference type="Rhea" id="RHEA-COMP:10468"/>
        <dbReference type="Rhea" id="RHEA-COMP:18655"/>
        <dbReference type="ChEBI" id="CHEBI:30616"/>
        <dbReference type="ChEBI" id="CHEBI:33019"/>
        <dbReference type="ChEBI" id="CHEBI:37563"/>
        <dbReference type="ChEBI" id="CHEBI:83071"/>
        <dbReference type="ChEBI" id="CHEBI:195187"/>
    </reaction>
    <physiologicalReaction direction="left-to-right" evidence="1">
        <dbReference type="Rhea" id="RHEA:76236"/>
    </physiologicalReaction>
</comment>
<comment type="cofactor">
    <cofactor evidence="1">
        <name>Mg(2+)</name>
        <dbReference type="ChEBI" id="CHEBI:18420"/>
    </cofactor>
</comment>
<comment type="subunit">
    <text evidence="1">Homodimer.</text>
</comment>
<comment type="miscellaneous">
    <text evidence="1">A single active site specifically recognizes both ATP and CTP and is responsible for their addition.</text>
</comment>
<comment type="similarity">
    <text evidence="1">Belongs to the tRNA nucleotidyltransferase/poly(A) polymerase family. Archaeal CCA-adding enzyme subfamily.</text>
</comment>
<sequence>MTDAAAVIERVRQRVDPTPAERRALAAAASRLTERAEAAIAELPVAADVVQVGSTARGTWVAGDRDIDLFVRFPSDLPREQLETYGTTVGAAVLPDGHEEYAEHPYVTGTFEGYAVDLVPCYDVAAATEIKSAVDRTPFHTTYLQEHLDDGLAADVRLCKQFLKGIGVYGSDLRTQGFSGYLCELLVVEYGGFEAMLAAIEDWQPPVVIDPAAHQQASFDDPLVVVDPTDPERNVAAVVSAANVATVQHHARRFRATPSEDAFTPASPAPLDAAALRSHIDRRDTTPLAVVLDAPDVVADQLYPQLYRSRDGVVRGLREHGFDVVRAAAWADERAVVFVELASAELPAVERHVGPPVSVGTHAERFYETYADDDGVYGPFVDDDGRYVVERDRDVRTAGGFARTELGTVALGARIESRVASGDYDVYVGDAVVEALLPEFESELAAYVDPKA</sequence>
<organism>
    <name type="scientific">Halobacterium salinarum (strain ATCC 29341 / DSM 671 / R1)</name>
    <dbReference type="NCBI Taxonomy" id="478009"/>
    <lineage>
        <taxon>Archaea</taxon>
        <taxon>Methanobacteriati</taxon>
        <taxon>Methanobacteriota</taxon>
        <taxon>Stenosarchaea group</taxon>
        <taxon>Halobacteria</taxon>
        <taxon>Halobacteriales</taxon>
        <taxon>Halobacteriaceae</taxon>
        <taxon>Halobacterium</taxon>
        <taxon>Halobacterium salinarum NRC-34001</taxon>
    </lineage>
</organism>
<name>CCA_HALS3</name>
<feature type="chain" id="PRO_1000140079" description="CCA-adding enzyme">
    <location>
        <begin position="1"/>
        <end position="452"/>
    </location>
</feature>
<feature type="binding site" evidence="1">
    <location>
        <position position="54"/>
    </location>
    <ligand>
        <name>ATP</name>
        <dbReference type="ChEBI" id="CHEBI:30616"/>
    </ligand>
</feature>
<feature type="binding site" evidence="1">
    <location>
        <position position="54"/>
    </location>
    <ligand>
        <name>CTP</name>
        <dbReference type="ChEBI" id="CHEBI:37563"/>
    </ligand>
</feature>
<feature type="binding site" evidence="1">
    <location>
        <position position="57"/>
    </location>
    <ligand>
        <name>ATP</name>
        <dbReference type="ChEBI" id="CHEBI:30616"/>
    </ligand>
</feature>
<feature type="binding site" evidence="1">
    <location>
        <position position="57"/>
    </location>
    <ligand>
        <name>CTP</name>
        <dbReference type="ChEBI" id="CHEBI:37563"/>
    </ligand>
</feature>
<feature type="binding site" evidence="1">
    <location>
        <position position="66"/>
    </location>
    <ligand>
        <name>Mg(2+)</name>
        <dbReference type="ChEBI" id="CHEBI:18420"/>
    </ligand>
</feature>
<feature type="binding site" evidence="1">
    <location>
        <position position="68"/>
    </location>
    <ligand>
        <name>Mg(2+)</name>
        <dbReference type="ChEBI" id="CHEBI:18420"/>
    </ligand>
</feature>
<feature type="binding site" evidence="1">
    <location>
        <position position="117"/>
    </location>
    <ligand>
        <name>Mg(2+)</name>
        <dbReference type="ChEBI" id="CHEBI:18420"/>
    </ligand>
</feature>
<feature type="binding site" evidence="1">
    <location>
        <position position="140"/>
    </location>
    <ligand>
        <name>ATP</name>
        <dbReference type="ChEBI" id="CHEBI:30616"/>
    </ligand>
</feature>
<feature type="binding site" evidence="1">
    <location>
        <position position="140"/>
    </location>
    <ligand>
        <name>CTP</name>
        <dbReference type="ChEBI" id="CHEBI:37563"/>
    </ligand>
</feature>
<feature type="binding site" evidence="1">
    <location>
        <position position="160"/>
    </location>
    <ligand>
        <name>ATP</name>
        <dbReference type="ChEBI" id="CHEBI:30616"/>
    </ligand>
</feature>
<feature type="binding site" evidence="1">
    <location>
        <position position="160"/>
    </location>
    <ligand>
        <name>CTP</name>
        <dbReference type="ChEBI" id="CHEBI:37563"/>
    </ligand>
</feature>
<feature type="binding site" evidence="1">
    <location>
        <position position="169"/>
    </location>
    <ligand>
        <name>ATP</name>
        <dbReference type="ChEBI" id="CHEBI:30616"/>
    </ligand>
</feature>
<feature type="binding site" evidence="1">
    <location>
        <position position="169"/>
    </location>
    <ligand>
        <name>CTP</name>
        <dbReference type="ChEBI" id="CHEBI:37563"/>
    </ligand>
</feature>
<keyword id="KW-0067">ATP-binding</keyword>
<keyword id="KW-0460">Magnesium</keyword>
<keyword id="KW-0479">Metal-binding</keyword>
<keyword id="KW-0547">Nucleotide-binding</keyword>
<keyword id="KW-0548">Nucleotidyltransferase</keyword>
<keyword id="KW-0692">RNA repair</keyword>
<keyword id="KW-0694">RNA-binding</keyword>
<keyword id="KW-0808">Transferase</keyword>
<keyword id="KW-0819">tRNA processing</keyword>
<protein>
    <recommendedName>
        <fullName evidence="1">CCA-adding enzyme</fullName>
        <ecNumber evidence="1">2.7.7.72</ecNumber>
    </recommendedName>
    <alternativeName>
        <fullName evidence="1">CCA tRNA nucleotidyltransferase</fullName>
    </alternativeName>
    <alternativeName>
        <fullName evidence="1">tRNA CCA-pyrophosphorylase</fullName>
    </alternativeName>
    <alternativeName>
        <fullName evidence="1">tRNA adenylyl-/cytidylyl- transferase</fullName>
    </alternativeName>
    <alternativeName>
        <fullName evidence="1">tRNA nucleotidyltransferase</fullName>
    </alternativeName>
    <alternativeName>
        <fullName evidence="1">tRNA-NT</fullName>
    </alternativeName>
</protein>
<dbReference type="EC" id="2.7.7.72" evidence="1"/>
<dbReference type="EMBL" id="AM774415">
    <property type="protein sequence ID" value="CAP13014.1"/>
    <property type="molecule type" value="Genomic_DNA"/>
</dbReference>
<dbReference type="RefSeq" id="WP_010902052.1">
    <property type="nucleotide sequence ID" value="NC_010364.1"/>
</dbReference>
<dbReference type="SMR" id="B0R2Q7"/>
<dbReference type="EnsemblBacteria" id="CAP13014">
    <property type="protein sequence ID" value="CAP13014"/>
    <property type="gene ID" value="OE_1222R"/>
</dbReference>
<dbReference type="GeneID" id="68693113"/>
<dbReference type="KEGG" id="hsl:OE_1222R"/>
<dbReference type="HOGENOM" id="CLU_044679_0_0_2"/>
<dbReference type="PhylomeDB" id="B0R2Q7"/>
<dbReference type="Proteomes" id="UP000001321">
    <property type="component" value="Chromosome"/>
</dbReference>
<dbReference type="GO" id="GO:0005524">
    <property type="term" value="F:ATP binding"/>
    <property type="evidence" value="ECO:0007669"/>
    <property type="project" value="UniProtKB-UniRule"/>
</dbReference>
<dbReference type="GO" id="GO:0004810">
    <property type="term" value="F:CCA tRNA nucleotidyltransferase activity"/>
    <property type="evidence" value="ECO:0007669"/>
    <property type="project" value="UniProtKB-UniRule"/>
</dbReference>
<dbReference type="GO" id="GO:0000287">
    <property type="term" value="F:magnesium ion binding"/>
    <property type="evidence" value="ECO:0007669"/>
    <property type="project" value="UniProtKB-UniRule"/>
</dbReference>
<dbReference type="GO" id="GO:0000049">
    <property type="term" value="F:tRNA binding"/>
    <property type="evidence" value="ECO:0007669"/>
    <property type="project" value="UniProtKB-UniRule"/>
</dbReference>
<dbReference type="GO" id="GO:0042245">
    <property type="term" value="P:RNA repair"/>
    <property type="evidence" value="ECO:0007669"/>
    <property type="project" value="UniProtKB-KW"/>
</dbReference>
<dbReference type="GO" id="GO:0001680">
    <property type="term" value="P:tRNA 3'-terminal CCA addition"/>
    <property type="evidence" value="ECO:0007669"/>
    <property type="project" value="UniProtKB-UniRule"/>
</dbReference>
<dbReference type="CDD" id="cd05400">
    <property type="entry name" value="NT_2-5OAS_ClassI-CCAase"/>
    <property type="match status" value="1"/>
</dbReference>
<dbReference type="Gene3D" id="3.30.70.1550">
    <property type="entry name" value="Archaeal tRNA CCA-adding enzyme catalytic domain"/>
    <property type="match status" value="1"/>
</dbReference>
<dbReference type="Gene3D" id="3.30.460.10">
    <property type="entry name" value="Beta Polymerase, domain 2"/>
    <property type="match status" value="1"/>
</dbReference>
<dbReference type="Gene3D" id="1.10.1410.30">
    <property type="entry name" value="CCA tRNA nucleotidyltransferase, domain 2"/>
    <property type="match status" value="1"/>
</dbReference>
<dbReference type="Gene3D" id="3.30.70.590">
    <property type="entry name" value="Poly(A) polymerase predicted RNA binding domain"/>
    <property type="match status" value="1"/>
</dbReference>
<dbReference type="HAMAP" id="MF_01264">
    <property type="entry name" value="CCA_arch"/>
    <property type="match status" value="1"/>
</dbReference>
<dbReference type="InterPro" id="IPR048833">
    <property type="entry name" value="CAA_C"/>
</dbReference>
<dbReference type="InterPro" id="IPR008229">
    <property type="entry name" value="CCA-adding_arc"/>
</dbReference>
<dbReference type="InterPro" id="IPR042090">
    <property type="entry name" value="CCA_tRNA_nucleotrans_2"/>
</dbReference>
<dbReference type="InterPro" id="IPR006116">
    <property type="entry name" value="NT_2-5OAS_ClassI-CCAase"/>
</dbReference>
<dbReference type="InterPro" id="IPR043519">
    <property type="entry name" value="NT_sf"/>
</dbReference>
<dbReference type="InterPro" id="IPR011068">
    <property type="entry name" value="NuclTrfase_I-like_C"/>
</dbReference>
<dbReference type="InterPro" id="IPR002934">
    <property type="entry name" value="Polymerase_NTP_transf_dom"/>
</dbReference>
<dbReference type="InterPro" id="IPR015329">
    <property type="entry name" value="tRNA_NucTransf2"/>
</dbReference>
<dbReference type="NCBIfam" id="TIGR03671">
    <property type="entry name" value="cca_archaeal"/>
    <property type="match status" value="1"/>
</dbReference>
<dbReference type="PANTHER" id="PTHR39643">
    <property type="entry name" value="CCA-ADDING ENZYME"/>
    <property type="match status" value="1"/>
</dbReference>
<dbReference type="PANTHER" id="PTHR39643:SF1">
    <property type="entry name" value="CCA-ADDING ENZYME"/>
    <property type="match status" value="1"/>
</dbReference>
<dbReference type="Pfam" id="PF21133">
    <property type="entry name" value="CAA_C"/>
    <property type="match status" value="1"/>
</dbReference>
<dbReference type="Pfam" id="PF01909">
    <property type="entry name" value="NTP_transf_2"/>
    <property type="match status" value="1"/>
</dbReference>
<dbReference type="Pfam" id="PF09249">
    <property type="entry name" value="tRNA_NucTransf2"/>
    <property type="match status" value="1"/>
</dbReference>
<dbReference type="PIRSF" id="PIRSF005335">
    <property type="entry name" value="CCA_arch"/>
    <property type="match status" value="1"/>
</dbReference>
<dbReference type="SUPFAM" id="SSF81301">
    <property type="entry name" value="Nucleotidyltransferase"/>
    <property type="match status" value="1"/>
</dbReference>
<dbReference type="SUPFAM" id="SSF55003">
    <property type="entry name" value="PAP/Archaeal CCA-adding enzyme, C-terminal domain"/>
    <property type="match status" value="1"/>
</dbReference>
<dbReference type="SUPFAM" id="SSF81631">
    <property type="entry name" value="PAP/OAS1 substrate-binding domain"/>
    <property type="match status" value="1"/>
</dbReference>
<reference key="1">
    <citation type="journal article" date="2008" name="Genomics">
        <title>Evolution in the laboratory: the genome of Halobacterium salinarum strain R1 compared to that of strain NRC-1.</title>
        <authorList>
            <person name="Pfeiffer F."/>
            <person name="Schuster S.C."/>
            <person name="Broicher A."/>
            <person name="Falb M."/>
            <person name="Palm P."/>
            <person name="Rodewald K."/>
            <person name="Ruepp A."/>
            <person name="Soppa J."/>
            <person name="Tittor J."/>
            <person name="Oesterhelt D."/>
        </authorList>
    </citation>
    <scope>NUCLEOTIDE SEQUENCE [LARGE SCALE GENOMIC DNA]</scope>
    <source>
        <strain>ATCC 29341 / DSM 671 / R1</strain>
    </source>
</reference>
<proteinExistence type="inferred from homology"/>